<feature type="chain" id="PRO_0000215863" description="Probable cysteine protease ATG4">
    <location>
        <begin position="1"/>
        <end position="450"/>
    </location>
</feature>
<feature type="active site" description="Nucleophile" evidence="2">
    <location>
        <position position="122"/>
    </location>
</feature>
<feature type="active site" evidence="2">
    <location>
        <position position="297"/>
    </location>
</feature>
<feature type="active site" evidence="2">
    <location>
        <position position="299"/>
    </location>
</feature>
<keyword id="KW-0072">Autophagy</keyword>
<keyword id="KW-0963">Cytoplasm</keyword>
<keyword id="KW-0378">Hydrolase</keyword>
<keyword id="KW-0539">Nucleus</keyword>
<keyword id="KW-0645">Protease</keyword>
<keyword id="KW-0653">Protein transport</keyword>
<keyword id="KW-1185">Reference proteome</keyword>
<keyword id="KW-0788">Thiol protease</keyword>
<keyword id="KW-0813">Transport</keyword>
<reference key="1">
    <citation type="journal article" date="2004" name="Nature">
        <title>Genome evolution in yeasts.</title>
        <authorList>
            <person name="Dujon B."/>
            <person name="Sherman D."/>
            <person name="Fischer G."/>
            <person name="Durrens P."/>
            <person name="Casaregola S."/>
            <person name="Lafontaine I."/>
            <person name="de Montigny J."/>
            <person name="Marck C."/>
            <person name="Neuveglise C."/>
            <person name="Talla E."/>
            <person name="Goffard N."/>
            <person name="Frangeul L."/>
            <person name="Aigle M."/>
            <person name="Anthouard V."/>
            <person name="Babour A."/>
            <person name="Barbe V."/>
            <person name="Barnay S."/>
            <person name="Blanchin S."/>
            <person name="Beckerich J.-M."/>
            <person name="Beyne E."/>
            <person name="Bleykasten C."/>
            <person name="Boisrame A."/>
            <person name="Boyer J."/>
            <person name="Cattolico L."/>
            <person name="Confanioleri F."/>
            <person name="de Daruvar A."/>
            <person name="Despons L."/>
            <person name="Fabre E."/>
            <person name="Fairhead C."/>
            <person name="Ferry-Dumazet H."/>
            <person name="Groppi A."/>
            <person name="Hantraye F."/>
            <person name="Hennequin C."/>
            <person name="Jauniaux N."/>
            <person name="Joyet P."/>
            <person name="Kachouri R."/>
            <person name="Kerrest A."/>
            <person name="Koszul R."/>
            <person name="Lemaire M."/>
            <person name="Lesur I."/>
            <person name="Ma L."/>
            <person name="Muller H."/>
            <person name="Nicaud J.-M."/>
            <person name="Nikolski M."/>
            <person name="Oztas S."/>
            <person name="Ozier-Kalogeropoulos O."/>
            <person name="Pellenz S."/>
            <person name="Potier S."/>
            <person name="Richard G.-F."/>
            <person name="Straub M.-L."/>
            <person name="Suleau A."/>
            <person name="Swennen D."/>
            <person name="Tekaia F."/>
            <person name="Wesolowski-Louvel M."/>
            <person name="Westhof E."/>
            <person name="Wirth B."/>
            <person name="Zeniou-Meyer M."/>
            <person name="Zivanovic Y."/>
            <person name="Bolotin-Fukuhara M."/>
            <person name="Thierry A."/>
            <person name="Bouchier C."/>
            <person name="Caudron B."/>
            <person name="Scarpelli C."/>
            <person name="Gaillardin C."/>
            <person name="Weissenbach J."/>
            <person name="Wincker P."/>
            <person name="Souciet J.-L."/>
        </authorList>
    </citation>
    <scope>NUCLEOTIDE SEQUENCE [LARGE SCALE GENOMIC DNA]</scope>
    <source>
        <strain>ATCC 8585 / CBS 2359 / DSM 70799 / NBRC 1267 / NRRL Y-1140 / WM37</strain>
    </source>
</reference>
<comment type="function">
    <text evidence="1">Cysteine protease that plays a key role in cytoplasm to vacuole transport (Cvt) and autophagy by mediating both proteolytic activation and delipidation of ATG8. Required for selective autophagic degradation of the nucleus (nucleophagy) as well as for mitophagy which contributes to regulate mitochondrial quantity and quality by eliminating the mitochondria to a basal level to fulfill cellular energy requirements and preventing excess ROS production. The protease activity is required for proteolytic activation of ATG8: cleaves the C-terminal amino acid of ATG8 to reveal a C-terminal glycine. ATG8 ubiquitin-like activity requires the exposure of the glycine at the C-terminus for its conjugation to phosphatidylethanolamine (PE) and its insertion to membranes, which is necessary for autophagy. The ATG8-PE conjugate mediates tethering between adjacent membranes and stimulates membrane hemifusion, leading to expansion of the autophagosomal membrane during autophagy. In addition to the protease activity, also catalyzes deconjugation of PE-conjugated forms of ATG8 during macroautophagy: ATG8 delipidation is required to release the protein from membranes, which facilitates multiple events during macroautophagy, and especially for efficient autophagosome biogenesis, the assembly of ATG9-containing tubulovesicular clusters into phagophores/autophagosomes, and for the disassembly of PAS-associated ATG components. ATG8 delipidation by ATG4 also recycles ATG8-PE generated on inappropriate membranes to maintain a reservoir of unlipidated ATG8 that is required for autophagosome formation at the PAS.</text>
</comment>
<comment type="catalytic activity">
    <reaction evidence="1">
        <text>[protein]-C-terminal L-amino acid-glycyl-phosphatidylethanolamide + H2O = [protein]-C-terminal L-amino acid-glycine + a 1,2-diacyl-sn-glycero-3-phosphoethanolamine</text>
        <dbReference type="Rhea" id="RHEA:67548"/>
        <dbReference type="Rhea" id="RHEA-COMP:17323"/>
        <dbReference type="Rhea" id="RHEA-COMP:17324"/>
        <dbReference type="ChEBI" id="CHEBI:15377"/>
        <dbReference type="ChEBI" id="CHEBI:64612"/>
        <dbReference type="ChEBI" id="CHEBI:172940"/>
        <dbReference type="ChEBI" id="CHEBI:172941"/>
    </reaction>
    <physiologicalReaction direction="left-to-right" evidence="1">
        <dbReference type="Rhea" id="RHEA:67549"/>
    </physiologicalReaction>
</comment>
<comment type="subcellular location">
    <subcellularLocation>
        <location evidence="1">Cytoplasm</location>
    </subcellularLocation>
    <subcellularLocation>
        <location evidence="1">Nucleus</location>
    </subcellularLocation>
    <subcellularLocation>
        <location evidence="1">Preautophagosomal structure</location>
    </subcellularLocation>
</comment>
<comment type="similarity">
    <text evidence="3">Belongs to the peptidase C54 family.</text>
</comment>
<organism>
    <name type="scientific">Kluyveromyces lactis (strain ATCC 8585 / CBS 2359 / DSM 70799 / NBRC 1267 / NRRL Y-1140 / WM37)</name>
    <name type="common">Yeast</name>
    <name type="synonym">Candida sphaerica</name>
    <dbReference type="NCBI Taxonomy" id="284590"/>
    <lineage>
        <taxon>Eukaryota</taxon>
        <taxon>Fungi</taxon>
        <taxon>Dikarya</taxon>
        <taxon>Ascomycota</taxon>
        <taxon>Saccharomycotina</taxon>
        <taxon>Saccharomycetes</taxon>
        <taxon>Saccharomycetales</taxon>
        <taxon>Saccharomycetaceae</taxon>
        <taxon>Kluyveromyces</taxon>
    </lineage>
</organism>
<protein>
    <recommendedName>
        <fullName>Probable cysteine protease ATG4</fullName>
        <ecNumber>3.4.22.-</ecNumber>
    </recommendedName>
    <alternativeName>
        <fullName>Autophagy-related protein 4</fullName>
    </alternativeName>
</protein>
<dbReference type="EC" id="3.4.22.-"/>
<dbReference type="EMBL" id="CR382124">
    <property type="protein sequence ID" value="CAH01025.1"/>
    <property type="molecule type" value="Genomic_DNA"/>
</dbReference>
<dbReference type="RefSeq" id="XP_453929.1">
    <property type="nucleotide sequence ID" value="XM_453929.1"/>
</dbReference>
<dbReference type="SMR" id="Q6CQ60"/>
<dbReference type="FunCoup" id="Q6CQ60">
    <property type="interactions" value="332"/>
</dbReference>
<dbReference type="STRING" id="284590.Q6CQ60"/>
<dbReference type="MEROPS" id="C54.001"/>
<dbReference type="PaxDb" id="284590-Q6CQ60"/>
<dbReference type="KEGG" id="kla:KLLA0_D19536g"/>
<dbReference type="eggNOG" id="KOG2674">
    <property type="taxonomic scope" value="Eukaryota"/>
</dbReference>
<dbReference type="HOGENOM" id="CLU_021259_5_3_1"/>
<dbReference type="InParanoid" id="Q6CQ60"/>
<dbReference type="OMA" id="PDETFHC"/>
<dbReference type="Proteomes" id="UP000000598">
    <property type="component" value="Chromosome D"/>
</dbReference>
<dbReference type="GO" id="GO:0005634">
    <property type="term" value="C:nucleus"/>
    <property type="evidence" value="ECO:0007669"/>
    <property type="project" value="UniProtKB-SubCell"/>
</dbReference>
<dbReference type="GO" id="GO:0000407">
    <property type="term" value="C:phagophore assembly site"/>
    <property type="evidence" value="ECO:0007669"/>
    <property type="project" value="UniProtKB-SubCell"/>
</dbReference>
<dbReference type="GO" id="GO:0004197">
    <property type="term" value="F:cysteine-type endopeptidase activity"/>
    <property type="evidence" value="ECO:0007669"/>
    <property type="project" value="TreeGrafter"/>
</dbReference>
<dbReference type="GO" id="GO:0019786">
    <property type="term" value="F:protein-phosphatidylethanolamide deconjugating activity"/>
    <property type="evidence" value="ECO:0007669"/>
    <property type="project" value="InterPro"/>
</dbReference>
<dbReference type="GO" id="GO:0035973">
    <property type="term" value="P:aggrephagy"/>
    <property type="evidence" value="ECO:0007669"/>
    <property type="project" value="TreeGrafter"/>
</dbReference>
<dbReference type="GO" id="GO:0000045">
    <property type="term" value="P:autophagosome assembly"/>
    <property type="evidence" value="ECO:0007669"/>
    <property type="project" value="TreeGrafter"/>
</dbReference>
<dbReference type="GO" id="GO:0000423">
    <property type="term" value="P:mitophagy"/>
    <property type="evidence" value="ECO:0007669"/>
    <property type="project" value="TreeGrafter"/>
</dbReference>
<dbReference type="GO" id="GO:0034727">
    <property type="term" value="P:piecemeal microautophagy of the nucleus"/>
    <property type="evidence" value="ECO:0007669"/>
    <property type="project" value="TreeGrafter"/>
</dbReference>
<dbReference type="GO" id="GO:0016485">
    <property type="term" value="P:protein processing"/>
    <property type="evidence" value="ECO:0007669"/>
    <property type="project" value="TreeGrafter"/>
</dbReference>
<dbReference type="GO" id="GO:0015031">
    <property type="term" value="P:protein transport"/>
    <property type="evidence" value="ECO:0007669"/>
    <property type="project" value="UniProtKB-KW"/>
</dbReference>
<dbReference type="InterPro" id="IPR038765">
    <property type="entry name" value="Papain-like_cys_pep_sf"/>
</dbReference>
<dbReference type="InterPro" id="IPR005078">
    <property type="entry name" value="Peptidase_C54"/>
</dbReference>
<dbReference type="InterPro" id="IPR046792">
    <property type="entry name" value="Peptidase_C54_cat"/>
</dbReference>
<dbReference type="PANTHER" id="PTHR22624:SF49">
    <property type="entry name" value="CYSTEINE PROTEASE"/>
    <property type="match status" value="1"/>
</dbReference>
<dbReference type="PANTHER" id="PTHR22624">
    <property type="entry name" value="CYSTEINE PROTEASE ATG4"/>
    <property type="match status" value="1"/>
</dbReference>
<dbReference type="Pfam" id="PF03416">
    <property type="entry name" value="Peptidase_C54"/>
    <property type="match status" value="1"/>
</dbReference>
<dbReference type="SUPFAM" id="SSF54001">
    <property type="entry name" value="Cysteine proteinases"/>
    <property type="match status" value="1"/>
</dbReference>
<sequence length="450" mass="51121">MEFLSRISQHLGIVEDVDRDGTVFILGKEYAPLNNKSRTDVETDDSALESLINIVSLNPGLLSDVHSRVFFTYRTQFTPIRRNENGPSPINFTLFFRDNPINTLENALTDPDSFYSDIGWGCMIRTGQALLANAIQRVKLAREFRINASRIDDNELNLIRWFQDDVKYPLSLHNFVKAEEKISGMKPGQWFGPSATARSIKTLIEGFPLCGIKNCIISTQSADIYEDEVTRIFHKDRDANLLLLFAVRLGVDKINSLYWKDIFKILSSPYSVGIAGGKPSSSLYFFGYQNENLFYLDPHNTQQSSLMMDDLEFYRSCHGHKFNKLHISETDPSMLLGMLISGKNEWDQFHTYFRDSQIIQFLTTRPENDLYQSANMSVGSDSIHSLESDIQDTGEYVDVGTLVSGKQMSSPQPKDEEFEDVKCKSQRIIVCEDPADPEVEQVLVEDSSSC</sequence>
<proteinExistence type="inferred from homology"/>
<accession>Q6CQ60</accession>
<name>ATG4_KLULA</name>
<evidence type="ECO:0000250" key="1">
    <source>
        <dbReference type="UniProtKB" id="P53867"/>
    </source>
</evidence>
<evidence type="ECO:0000250" key="2">
    <source>
        <dbReference type="UniProtKB" id="Q9Y4P1"/>
    </source>
</evidence>
<evidence type="ECO:0000305" key="3"/>
<gene>
    <name type="primary">ATG4</name>
    <name type="ordered locus">KLLA0D19536g</name>
</gene>